<protein>
    <recommendedName>
        <fullName evidence="7">Inactive metallocarboxypeptidase ecm14</fullName>
    </recommendedName>
</protein>
<gene>
    <name type="primary">ecm14</name>
    <name type="ORF">AFUA_2G08790</name>
</gene>
<sequence length="586" mass="66069">MRLLLSVLLLLVASLGLVSAVPAGSSITPPPPIEPIQWLSSRSTDSRRPWIRVRDWVIESIWGISKDASHHRSVKASPRSRSPSRSLTRYGSDVVLRFHLRNAEEAEALAEATDVLFLDVWTSTSEFVDIRLAQEVIPSLLGLLPDSLRTAYTPLIDNLAEMIYATYPTRRPAGFEDQPGFIPSMRQSTQFGDLFFRDYQPLSVIVPWMRLMASMFSSHVQMINVGVSHEGREIPALRLGRTRGQTADPYPRKTIVVVGGSHAREWISTSTVIYVAYSLITRYGKSQQVTRLLEDFDWVFVPTLNPDGYVYTWESDRLWRKNRQPTSLHFCPGIDLDRAWEFQWDGERTRSNPCSENYAGTEPFEGTEAHQLAQWALNETQTNNAKIVGFLDLHSYSQQILYPFSFSCSSVPPTLESLEELGIGLAKVIRLTTHEIYDVTAACEGTITADDQARNSPPQRPIFPTGGSSGGSALDWFYHQLHTDYAYQIKLRDRGSYGFLLPSEYIVPTGKEIFNVVLTFGKFLIGDLAQNTDLDWDAELQRTEPDEAPASQGDGPAPATQQVLQADVDDEETEWVENARSEFRRR</sequence>
<accession>Q4X1U0</accession>
<feature type="signal peptide" evidence="4">
    <location>
        <begin position="1"/>
        <end position="20"/>
    </location>
</feature>
<feature type="propeptide" id="PRO_0000453237" evidence="3">
    <location>
        <begin position="21"/>
        <end position="170"/>
    </location>
</feature>
<feature type="chain" id="PRO_0000411178" description="Inactive metallocarboxypeptidase ecm14">
    <location>
        <begin position="171"/>
        <end position="586"/>
    </location>
</feature>
<feature type="domain" description="Peptidase M14" evidence="5">
    <location>
        <begin position="198"/>
        <end position="524"/>
    </location>
</feature>
<feature type="region of interest" description="Disordered" evidence="6">
    <location>
        <begin position="540"/>
        <end position="586"/>
    </location>
</feature>
<feature type="compositionally biased region" description="Basic and acidic residues" evidence="6">
    <location>
        <begin position="577"/>
        <end position="586"/>
    </location>
</feature>
<feature type="binding site" evidence="1">
    <location>
        <begin position="262"/>
        <end position="265"/>
    </location>
    <ligand>
        <name>substrate</name>
    </ligand>
</feature>
<feature type="binding site" evidence="5">
    <location>
        <position position="262"/>
    </location>
    <ligand>
        <name>Zn(2+)</name>
        <dbReference type="ChEBI" id="CHEBI:29105"/>
        <note>catalytic</note>
    </ligand>
</feature>
<feature type="binding site" evidence="5">
    <location>
        <position position="265"/>
    </location>
    <ligand>
        <name>Zn(2+)</name>
        <dbReference type="ChEBI" id="CHEBI:29105"/>
        <note>catalytic</note>
    </ligand>
</feature>
<feature type="binding site" evidence="1">
    <location>
        <position position="320"/>
    </location>
    <ligand>
        <name>substrate</name>
    </ligand>
</feature>
<feature type="binding site" evidence="1">
    <location>
        <begin position="337"/>
        <end position="338"/>
    </location>
    <ligand>
        <name>substrate</name>
    </ligand>
</feature>
<feature type="binding site" evidence="5">
    <location>
        <position position="394"/>
    </location>
    <ligand>
        <name>Zn(2+)</name>
        <dbReference type="ChEBI" id="CHEBI:29105"/>
        <note>catalytic</note>
    </ligand>
</feature>
<feature type="binding site" evidence="1">
    <location>
        <begin position="395"/>
        <end position="396"/>
    </location>
    <ligand>
        <name>substrate</name>
    </ligand>
</feature>
<feature type="glycosylation site" description="N-linked (GlcNAc...) asparagine" evidence="4">
    <location>
        <position position="378"/>
    </location>
</feature>
<feature type="disulfide bond" evidence="2">
    <location>
        <begin position="331"/>
        <end position="354"/>
    </location>
</feature>
<reference key="1">
    <citation type="journal article" date="2005" name="Nature">
        <title>Genomic sequence of the pathogenic and allergenic filamentous fungus Aspergillus fumigatus.</title>
        <authorList>
            <person name="Nierman W.C."/>
            <person name="Pain A."/>
            <person name="Anderson M.J."/>
            <person name="Wortman J.R."/>
            <person name="Kim H.S."/>
            <person name="Arroyo J."/>
            <person name="Berriman M."/>
            <person name="Abe K."/>
            <person name="Archer D.B."/>
            <person name="Bermejo C."/>
            <person name="Bennett J.W."/>
            <person name="Bowyer P."/>
            <person name="Chen D."/>
            <person name="Collins M."/>
            <person name="Coulsen R."/>
            <person name="Davies R."/>
            <person name="Dyer P.S."/>
            <person name="Farman M.L."/>
            <person name="Fedorova N."/>
            <person name="Fedorova N.D."/>
            <person name="Feldblyum T.V."/>
            <person name="Fischer R."/>
            <person name="Fosker N."/>
            <person name="Fraser A."/>
            <person name="Garcia J.L."/>
            <person name="Garcia M.J."/>
            <person name="Goble A."/>
            <person name="Goldman G.H."/>
            <person name="Gomi K."/>
            <person name="Griffith-Jones S."/>
            <person name="Gwilliam R."/>
            <person name="Haas B.J."/>
            <person name="Haas H."/>
            <person name="Harris D.E."/>
            <person name="Horiuchi H."/>
            <person name="Huang J."/>
            <person name="Humphray S."/>
            <person name="Jimenez J."/>
            <person name="Keller N."/>
            <person name="Khouri H."/>
            <person name="Kitamoto K."/>
            <person name="Kobayashi T."/>
            <person name="Konzack S."/>
            <person name="Kulkarni R."/>
            <person name="Kumagai T."/>
            <person name="Lafton A."/>
            <person name="Latge J.-P."/>
            <person name="Li W."/>
            <person name="Lord A."/>
            <person name="Lu C."/>
            <person name="Majoros W.H."/>
            <person name="May G.S."/>
            <person name="Miller B.L."/>
            <person name="Mohamoud Y."/>
            <person name="Molina M."/>
            <person name="Monod M."/>
            <person name="Mouyna I."/>
            <person name="Mulligan S."/>
            <person name="Murphy L.D."/>
            <person name="O'Neil S."/>
            <person name="Paulsen I."/>
            <person name="Penalva M.A."/>
            <person name="Pertea M."/>
            <person name="Price C."/>
            <person name="Pritchard B.L."/>
            <person name="Quail M.A."/>
            <person name="Rabbinowitsch E."/>
            <person name="Rawlins N."/>
            <person name="Rajandream M.A."/>
            <person name="Reichard U."/>
            <person name="Renauld H."/>
            <person name="Robson G.D."/>
            <person name="Rodriguez de Cordoba S."/>
            <person name="Rodriguez-Pena J.M."/>
            <person name="Ronning C.M."/>
            <person name="Rutter S."/>
            <person name="Salzberg S.L."/>
            <person name="Sanchez M."/>
            <person name="Sanchez-Ferrero J.C."/>
            <person name="Saunders D."/>
            <person name="Seeger K."/>
            <person name="Squares R."/>
            <person name="Squares S."/>
            <person name="Takeuchi M."/>
            <person name="Tekaia F."/>
            <person name="Turner G."/>
            <person name="Vazquez de Aldana C.R."/>
            <person name="Weidman J."/>
            <person name="White O."/>
            <person name="Woodward J.R."/>
            <person name="Yu J.-H."/>
            <person name="Fraser C.M."/>
            <person name="Galagan J.E."/>
            <person name="Asai K."/>
            <person name="Machida M."/>
            <person name="Hall N."/>
            <person name="Barrell B.G."/>
            <person name="Denning D.W."/>
        </authorList>
    </citation>
    <scope>NUCLEOTIDE SEQUENCE [LARGE SCALE GENOMIC DNA]</scope>
    <source>
        <strain>ATCC MYA-4609 / CBS 101355 / FGSC A1100 / Af293</strain>
    </source>
</reference>
<evidence type="ECO:0000250" key="1">
    <source>
        <dbReference type="UniProtKB" id="P00730"/>
    </source>
</evidence>
<evidence type="ECO:0000250" key="2">
    <source>
        <dbReference type="UniProtKB" id="P15085"/>
    </source>
</evidence>
<evidence type="ECO:0000250" key="3">
    <source>
        <dbReference type="UniProtKB" id="P38836"/>
    </source>
</evidence>
<evidence type="ECO:0000255" key="4"/>
<evidence type="ECO:0000255" key="5">
    <source>
        <dbReference type="PROSITE-ProRule" id="PRU01379"/>
    </source>
</evidence>
<evidence type="ECO:0000256" key="6">
    <source>
        <dbReference type="SAM" id="MobiDB-lite"/>
    </source>
</evidence>
<evidence type="ECO:0000305" key="7"/>
<dbReference type="EMBL" id="AAHF01000001">
    <property type="protein sequence ID" value="EAL93175.1"/>
    <property type="molecule type" value="Genomic_DNA"/>
</dbReference>
<dbReference type="RefSeq" id="XP_755213.1">
    <property type="nucleotide sequence ID" value="XM_750120.1"/>
</dbReference>
<dbReference type="SMR" id="Q4X1U0"/>
<dbReference type="FunCoup" id="Q4X1U0">
    <property type="interactions" value="833"/>
</dbReference>
<dbReference type="STRING" id="330879.Q4X1U0"/>
<dbReference type="GlyCosmos" id="Q4X1U0">
    <property type="glycosylation" value="1 site, No reported glycans"/>
</dbReference>
<dbReference type="EnsemblFungi" id="EAL93175">
    <property type="protein sequence ID" value="EAL93175"/>
    <property type="gene ID" value="AFUA_2G08790"/>
</dbReference>
<dbReference type="GeneID" id="3513255"/>
<dbReference type="KEGG" id="afm:AFUA_2G08790"/>
<dbReference type="VEuPathDB" id="FungiDB:Afu2g08790"/>
<dbReference type="eggNOG" id="KOG2650">
    <property type="taxonomic scope" value="Eukaryota"/>
</dbReference>
<dbReference type="HOGENOM" id="CLU_019326_1_0_1"/>
<dbReference type="InParanoid" id="Q4X1U0"/>
<dbReference type="OMA" id="WFYHQLH"/>
<dbReference type="OrthoDB" id="3626597at2759"/>
<dbReference type="Proteomes" id="UP000002530">
    <property type="component" value="Chromosome 2"/>
</dbReference>
<dbReference type="GO" id="GO:0005615">
    <property type="term" value="C:extracellular space"/>
    <property type="evidence" value="ECO:0000318"/>
    <property type="project" value="GO_Central"/>
</dbReference>
<dbReference type="GO" id="GO:0005773">
    <property type="term" value="C:vacuole"/>
    <property type="evidence" value="ECO:0007669"/>
    <property type="project" value="UniProtKB-SubCell"/>
</dbReference>
<dbReference type="GO" id="GO:0008270">
    <property type="term" value="F:zinc ion binding"/>
    <property type="evidence" value="ECO:0007669"/>
    <property type="project" value="InterPro"/>
</dbReference>
<dbReference type="GO" id="GO:0071555">
    <property type="term" value="P:cell wall organization"/>
    <property type="evidence" value="ECO:0007669"/>
    <property type="project" value="UniProtKB-KW"/>
</dbReference>
<dbReference type="CDD" id="cd03860">
    <property type="entry name" value="M14_CP_A-B_like"/>
    <property type="match status" value="1"/>
</dbReference>
<dbReference type="FunFam" id="3.40.630.10:FF:000060">
    <property type="entry name" value="Putative metallocarboxypeptidase ecm14"/>
    <property type="match status" value="1"/>
</dbReference>
<dbReference type="Gene3D" id="3.30.70.340">
    <property type="entry name" value="Metallocarboxypeptidase-like"/>
    <property type="match status" value="1"/>
</dbReference>
<dbReference type="Gene3D" id="3.40.630.10">
    <property type="entry name" value="Zn peptidases"/>
    <property type="match status" value="1"/>
</dbReference>
<dbReference type="InterPro" id="IPR036990">
    <property type="entry name" value="M14A-like_propep"/>
</dbReference>
<dbReference type="InterPro" id="IPR000834">
    <property type="entry name" value="Peptidase_M14"/>
</dbReference>
<dbReference type="PANTHER" id="PTHR11705:SF147">
    <property type="entry name" value="INACTIVE METALLOCARBOXYPEPTIDASE ECM14"/>
    <property type="match status" value="1"/>
</dbReference>
<dbReference type="PANTHER" id="PTHR11705">
    <property type="entry name" value="PROTEASE FAMILY M14 CARBOXYPEPTIDASE A,B"/>
    <property type="match status" value="1"/>
</dbReference>
<dbReference type="Pfam" id="PF00246">
    <property type="entry name" value="Peptidase_M14"/>
    <property type="match status" value="1"/>
</dbReference>
<dbReference type="PRINTS" id="PR00765">
    <property type="entry name" value="CRBOXYPTASEA"/>
</dbReference>
<dbReference type="SMART" id="SM00631">
    <property type="entry name" value="Zn_pept"/>
    <property type="match status" value="1"/>
</dbReference>
<dbReference type="SUPFAM" id="SSF54897">
    <property type="entry name" value="Protease propeptides/inhibitors"/>
    <property type="match status" value="1"/>
</dbReference>
<dbReference type="SUPFAM" id="SSF53187">
    <property type="entry name" value="Zn-dependent exopeptidases"/>
    <property type="match status" value="1"/>
</dbReference>
<dbReference type="PROSITE" id="PS00132">
    <property type="entry name" value="CARBOXYPEPT_ZN_1"/>
    <property type="match status" value="1"/>
</dbReference>
<dbReference type="PROSITE" id="PS52035">
    <property type="entry name" value="PEPTIDASE_M14"/>
    <property type="match status" value="1"/>
</dbReference>
<proteinExistence type="inferred from homology"/>
<comment type="function">
    <text evidence="3">Inactive carboxypeptidase that may play a role in cell wall organization and biogenesis.</text>
</comment>
<comment type="cofactor">
    <cofactor evidence="1">
        <name>Zn(2+)</name>
        <dbReference type="ChEBI" id="CHEBI:29105"/>
    </cofactor>
    <text evidence="1">Binds 1 zinc ion per subunit.</text>
</comment>
<comment type="subcellular location">
    <subcellularLocation>
        <location evidence="3">Vacuole</location>
    </subcellularLocation>
    <subcellularLocation>
        <location evidence="3">Secreted</location>
    </subcellularLocation>
</comment>
<comment type="similarity">
    <text evidence="7">Belongs to the peptidase M14 family.</text>
</comment>
<comment type="caution">
    <text evidence="3">Lacks the conserved Glu residue in position 490 essential for carbopeptidase activity. The mature form lacks catalytic activity towards synthetic peptide substrates.</text>
</comment>
<keyword id="KW-0961">Cell wall biogenesis/degradation</keyword>
<keyword id="KW-1015">Disulfide bond</keyword>
<keyword id="KW-0325">Glycoprotein</keyword>
<keyword id="KW-0479">Metal-binding</keyword>
<keyword id="KW-1185">Reference proteome</keyword>
<keyword id="KW-0964">Secreted</keyword>
<keyword id="KW-0732">Signal</keyword>
<keyword id="KW-0926">Vacuole</keyword>
<keyword id="KW-0862">Zinc</keyword>
<name>ECM14_ASPFU</name>
<organism>
    <name type="scientific">Aspergillus fumigatus (strain ATCC MYA-4609 / CBS 101355 / FGSC A1100 / Af293)</name>
    <name type="common">Neosartorya fumigata</name>
    <dbReference type="NCBI Taxonomy" id="330879"/>
    <lineage>
        <taxon>Eukaryota</taxon>
        <taxon>Fungi</taxon>
        <taxon>Dikarya</taxon>
        <taxon>Ascomycota</taxon>
        <taxon>Pezizomycotina</taxon>
        <taxon>Eurotiomycetes</taxon>
        <taxon>Eurotiomycetidae</taxon>
        <taxon>Eurotiales</taxon>
        <taxon>Aspergillaceae</taxon>
        <taxon>Aspergillus</taxon>
        <taxon>Aspergillus subgen. Fumigati</taxon>
    </lineage>
</organism>